<accession>P81336</accession>
<proteinExistence type="evidence at protein level"/>
<reference key="1">
    <citation type="journal article" date="1998" name="Electrophoresis">
        <title>Two-dimensional gel electrophoresis separation and N-terminal sequence analysis of proteins from Clostridium pasteurianum W5.</title>
        <authorList>
            <person name="Flengsrud R."/>
            <person name="Skjeldal L."/>
        </authorList>
    </citation>
    <scope>PROTEIN SEQUENCE</scope>
    <source>
        <strain>ATCC 6013 / DSM 525 / NCIB 9486 / VKM B-1774 / W5</strain>
    </source>
</reference>
<dbReference type="EC" id="4.1.1.4" evidence="1"/>
<dbReference type="GO" id="GO:0047602">
    <property type="term" value="F:acetoacetate decarboxylase activity"/>
    <property type="evidence" value="ECO:0007669"/>
    <property type="project" value="UniProtKB-EC"/>
</dbReference>
<gene>
    <name type="primary">adc</name>
</gene>
<name>ADC_CLOPA</name>
<keyword id="KW-0210">Decarboxylase</keyword>
<keyword id="KW-0903">Direct protein sequencing</keyword>
<keyword id="KW-0456">Lyase</keyword>
<sequence length="19" mass="2079">MLKSEVSKQISMPLTAPAF</sequence>
<feature type="chain" id="PRO_0000207103" description="Acetoacetate decarboxylase">
    <location>
        <begin position="1"/>
        <end position="19" status="greater than"/>
    </location>
</feature>
<feature type="non-terminal residue">
    <location>
        <position position="19"/>
    </location>
</feature>
<comment type="function">
    <text evidence="1">Catalyzes the conversion of acetoacetate to acetone and carbon dioxide.</text>
</comment>
<comment type="catalytic activity">
    <reaction evidence="1">
        <text>acetoacetate + H(+) = acetone + CO2</text>
        <dbReference type="Rhea" id="RHEA:19729"/>
        <dbReference type="ChEBI" id="CHEBI:13705"/>
        <dbReference type="ChEBI" id="CHEBI:15347"/>
        <dbReference type="ChEBI" id="CHEBI:15378"/>
        <dbReference type="ChEBI" id="CHEBI:16526"/>
        <dbReference type="EC" id="4.1.1.4"/>
    </reaction>
</comment>
<comment type="similarity">
    <text evidence="2">Belongs to the ADC family.</text>
</comment>
<protein>
    <recommendedName>
        <fullName evidence="1">Acetoacetate decarboxylase</fullName>
        <shortName evidence="1">AAD</shortName>
        <shortName evidence="1">ADC</shortName>
        <ecNumber evidence="1">4.1.1.4</ecNumber>
    </recommendedName>
    <alternativeName>
        <fullName>CP 28/CP 29</fullName>
    </alternativeName>
</protein>
<evidence type="ECO:0000250" key="1">
    <source>
        <dbReference type="UniProtKB" id="P23670"/>
    </source>
</evidence>
<evidence type="ECO:0000305" key="2"/>
<organism>
    <name type="scientific">Clostridium pasteurianum</name>
    <dbReference type="NCBI Taxonomy" id="1501"/>
    <lineage>
        <taxon>Bacteria</taxon>
        <taxon>Bacillati</taxon>
        <taxon>Bacillota</taxon>
        <taxon>Clostridia</taxon>
        <taxon>Eubacteriales</taxon>
        <taxon>Clostridiaceae</taxon>
        <taxon>Clostridium</taxon>
    </lineage>
</organism>